<gene>
    <name evidence="1" type="primary">atpH</name>
    <name type="ordered locus">CT0018</name>
</gene>
<feature type="chain" id="PRO_1000184669" description="ATP synthase subunit delta">
    <location>
        <begin position="1"/>
        <end position="181"/>
    </location>
</feature>
<reference key="1">
    <citation type="journal article" date="2002" name="Proc. Natl. Acad. Sci. U.S.A.">
        <title>The complete genome sequence of Chlorobium tepidum TLS, a photosynthetic, anaerobic, green-sulfur bacterium.</title>
        <authorList>
            <person name="Eisen J.A."/>
            <person name="Nelson K.E."/>
            <person name="Paulsen I.T."/>
            <person name="Heidelberg J.F."/>
            <person name="Wu M."/>
            <person name="Dodson R.J."/>
            <person name="DeBoy R.T."/>
            <person name="Gwinn M.L."/>
            <person name="Nelson W.C."/>
            <person name="Haft D.H."/>
            <person name="Hickey E.K."/>
            <person name="Peterson J.D."/>
            <person name="Durkin A.S."/>
            <person name="Kolonay J.F."/>
            <person name="Yang F."/>
            <person name="Holt I.E."/>
            <person name="Umayam L.A."/>
            <person name="Mason T.M."/>
            <person name="Brenner M."/>
            <person name="Shea T.P."/>
            <person name="Parksey D.S."/>
            <person name="Nierman W.C."/>
            <person name="Feldblyum T.V."/>
            <person name="Hansen C.L."/>
            <person name="Craven M.B."/>
            <person name="Radune D."/>
            <person name="Vamathevan J.J."/>
            <person name="Khouri H.M."/>
            <person name="White O."/>
            <person name="Gruber T.M."/>
            <person name="Ketchum K.A."/>
            <person name="Venter J.C."/>
            <person name="Tettelin H."/>
            <person name="Bryant D.A."/>
            <person name="Fraser C.M."/>
        </authorList>
    </citation>
    <scope>NUCLEOTIDE SEQUENCE [LARGE SCALE GENOMIC DNA]</scope>
    <source>
        <strain>ATCC 49652 / DSM 12025 / NBRC 103806 / TLS</strain>
    </source>
</reference>
<sequence>MSSAIASRRYAVALLEVAVEGNFLEKVTEDLQKIQEVLSGSHELVLALKSPLINVDLKSKILEEIFRNKVDEKTMVFIKLLAHKKRAALLAGVISEFNALIDERNGVINADVKSAIKLSDEQAKELVNSLSVRTGKKIRAKMRLDENLIGGVTVKIGDTIIDGSISHQLEMLRHSLVAQPA</sequence>
<dbReference type="EMBL" id="AE006470">
    <property type="protein sequence ID" value="AAM71266.1"/>
    <property type="molecule type" value="Genomic_DNA"/>
</dbReference>
<dbReference type="RefSeq" id="NP_660924.1">
    <property type="nucleotide sequence ID" value="NC_002932.3"/>
</dbReference>
<dbReference type="RefSeq" id="WP_010931712.1">
    <property type="nucleotide sequence ID" value="NC_002932.3"/>
</dbReference>
<dbReference type="SMR" id="Q8KGF0"/>
<dbReference type="STRING" id="194439.CT0018"/>
<dbReference type="EnsemblBacteria" id="AAM71266">
    <property type="protein sequence ID" value="AAM71266"/>
    <property type="gene ID" value="CT0018"/>
</dbReference>
<dbReference type="KEGG" id="cte:CT0018"/>
<dbReference type="eggNOG" id="COG0712">
    <property type="taxonomic scope" value="Bacteria"/>
</dbReference>
<dbReference type="HOGENOM" id="CLU_085114_4_0_10"/>
<dbReference type="OrthoDB" id="9802471at2"/>
<dbReference type="Proteomes" id="UP000001007">
    <property type="component" value="Chromosome"/>
</dbReference>
<dbReference type="GO" id="GO:0005886">
    <property type="term" value="C:plasma membrane"/>
    <property type="evidence" value="ECO:0007669"/>
    <property type="project" value="UniProtKB-SubCell"/>
</dbReference>
<dbReference type="GO" id="GO:0045259">
    <property type="term" value="C:proton-transporting ATP synthase complex"/>
    <property type="evidence" value="ECO:0007669"/>
    <property type="project" value="UniProtKB-KW"/>
</dbReference>
<dbReference type="GO" id="GO:0046933">
    <property type="term" value="F:proton-transporting ATP synthase activity, rotational mechanism"/>
    <property type="evidence" value="ECO:0007669"/>
    <property type="project" value="UniProtKB-UniRule"/>
</dbReference>
<dbReference type="Gene3D" id="1.10.520.20">
    <property type="entry name" value="N-terminal domain of the delta subunit of the F1F0-ATP synthase"/>
    <property type="match status" value="1"/>
</dbReference>
<dbReference type="HAMAP" id="MF_01416">
    <property type="entry name" value="ATP_synth_delta_bact"/>
    <property type="match status" value="1"/>
</dbReference>
<dbReference type="InterPro" id="IPR026015">
    <property type="entry name" value="ATP_synth_OSCP/delta_N_sf"/>
</dbReference>
<dbReference type="InterPro" id="IPR000711">
    <property type="entry name" value="ATPase_OSCP/dsu"/>
</dbReference>
<dbReference type="NCBIfam" id="TIGR01145">
    <property type="entry name" value="ATP_synt_delta"/>
    <property type="match status" value="1"/>
</dbReference>
<dbReference type="NCBIfam" id="NF004403">
    <property type="entry name" value="PRK05758.2-4"/>
    <property type="match status" value="1"/>
</dbReference>
<dbReference type="PANTHER" id="PTHR11910">
    <property type="entry name" value="ATP SYNTHASE DELTA CHAIN"/>
    <property type="match status" value="1"/>
</dbReference>
<dbReference type="Pfam" id="PF00213">
    <property type="entry name" value="OSCP"/>
    <property type="match status" value="1"/>
</dbReference>
<dbReference type="PRINTS" id="PR00125">
    <property type="entry name" value="ATPASEDELTA"/>
</dbReference>
<dbReference type="SUPFAM" id="SSF47928">
    <property type="entry name" value="N-terminal domain of the delta subunit of the F1F0-ATP synthase"/>
    <property type="match status" value="1"/>
</dbReference>
<keyword id="KW-0066">ATP synthesis</keyword>
<keyword id="KW-0997">Cell inner membrane</keyword>
<keyword id="KW-1003">Cell membrane</keyword>
<keyword id="KW-0139">CF(1)</keyword>
<keyword id="KW-0375">Hydrogen ion transport</keyword>
<keyword id="KW-0406">Ion transport</keyword>
<keyword id="KW-0472">Membrane</keyword>
<keyword id="KW-1185">Reference proteome</keyword>
<keyword id="KW-0813">Transport</keyword>
<proteinExistence type="inferred from homology"/>
<comment type="function">
    <text evidence="1">F(1)F(0) ATP synthase produces ATP from ADP in the presence of a proton or sodium gradient. F-type ATPases consist of two structural domains, F(1) containing the extramembraneous catalytic core and F(0) containing the membrane proton channel, linked together by a central stalk and a peripheral stalk. During catalysis, ATP synthesis in the catalytic domain of F(1) is coupled via a rotary mechanism of the central stalk subunits to proton translocation.</text>
</comment>
<comment type="function">
    <text evidence="1">This protein is part of the stalk that links CF(0) to CF(1). It either transmits conformational changes from CF(0) to CF(1) or is implicated in proton conduction.</text>
</comment>
<comment type="subunit">
    <text evidence="1">F-type ATPases have 2 components, F(1) - the catalytic core - and F(0) - the membrane proton channel. F(1) has five subunits: alpha(3), beta(3), gamma(1), delta(1), epsilon(1). F(0) has three main subunits: a(1), b(2) and c(10-14). The alpha and beta chains form an alternating ring which encloses part of the gamma chain. F(1) is attached to F(0) by a central stalk formed by the gamma and epsilon chains, while a peripheral stalk is formed by the delta and b chains.</text>
</comment>
<comment type="subcellular location">
    <subcellularLocation>
        <location evidence="1">Cell inner membrane</location>
        <topology evidence="1">Peripheral membrane protein</topology>
    </subcellularLocation>
</comment>
<comment type="similarity">
    <text evidence="1">Belongs to the ATPase delta chain family.</text>
</comment>
<accession>Q8KGF0</accession>
<evidence type="ECO:0000255" key="1">
    <source>
        <dbReference type="HAMAP-Rule" id="MF_01416"/>
    </source>
</evidence>
<organism>
    <name type="scientific">Chlorobaculum tepidum (strain ATCC 49652 / DSM 12025 / NBRC 103806 / TLS)</name>
    <name type="common">Chlorobium tepidum</name>
    <dbReference type="NCBI Taxonomy" id="194439"/>
    <lineage>
        <taxon>Bacteria</taxon>
        <taxon>Pseudomonadati</taxon>
        <taxon>Chlorobiota</taxon>
        <taxon>Chlorobiia</taxon>
        <taxon>Chlorobiales</taxon>
        <taxon>Chlorobiaceae</taxon>
        <taxon>Chlorobaculum</taxon>
    </lineage>
</organism>
<protein>
    <recommendedName>
        <fullName evidence="1">ATP synthase subunit delta</fullName>
    </recommendedName>
    <alternativeName>
        <fullName evidence="1">ATP synthase F(1) sector subunit delta</fullName>
    </alternativeName>
    <alternativeName>
        <fullName evidence="1">F-type ATPase subunit delta</fullName>
        <shortName evidence="1">F-ATPase subunit delta</shortName>
    </alternativeName>
</protein>
<name>ATPD_CHLTE</name>